<proteinExistence type="inferred from homology"/>
<dbReference type="EMBL" id="CP000901">
    <property type="protein sequence ID" value="ABX85934.1"/>
    <property type="molecule type" value="Genomic_DNA"/>
</dbReference>
<dbReference type="RefSeq" id="WP_002210914.1">
    <property type="nucleotide sequence ID" value="NZ_CP009935.1"/>
</dbReference>
<dbReference type="SMR" id="A9R0L6"/>
<dbReference type="GeneID" id="57976936"/>
<dbReference type="KEGG" id="ypg:YpAngola_A2852"/>
<dbReference type="PATRIC" id="fig|349746.12.peg.3890"/>
<dbReference type="GO" id="GO:0005737">
    <property type="term" value="C:cytoplasm"/>
    <property type="evidence" value="ECO:0007669"/>
    <property type="project" value="UniProtKB-SubCell"/>
</dbReference>
<dbReference type="GO" id="GO:0005886">
    <property type="term" value="C:plasma membrane"/>
    <property type="evidence" value="ECO:0007669"/>
    <property type="project" value="UniProtKB-SubCell"/>
</dbReference>
<dbReference type="FunFam" id="1.10.3890.10:FF:000001">
    <property type="entry name" value="High frequency lysogenization protein HflD homolog"/>
    <property type="match status" value="1"/>
</dbReference>
<dbReference type="Gene3D" id="1.10.3890.10">
    <property type="entry name" value="HflD-like"/>
    <property type="match status" value="1"/>
</dbReference>
<dbReference type="HAMAP" id="MF_00695">
    <property type="entry name" value="HflD_protein"/>
    <property type="match status" value="1"/>
</dbReference>
<dbReference type="InterPro" id="IPR007451">
    <property type="entry name" value="HflD"/>
</dbReference>
<dbReference type="InterPro" id="IPR035932">
    <property type="entry name" value="HflD-like_sf"/>
</dbReference>
<dbReference type="NCBIfam" id="NF001246">
    <property type="entry name" value="PRK00218.1-2"/>
    <property type="match status" value="1"/>
</dbReference>
<dbReference type="NCBIfam" id="NF001248">
    <property type="entry name" value="PRK00218.1-4"/>
    <property type="match status" value="1"/>
</dbReference>
<dbReference type="NCBIfam" id="NF001249">
    <property type="entry name" value="PRK00218.1-5"/>
    <property type="match status" value="1"/>
</dbReference>
<dbReference type="PANTHER" id="PTHR38100">
    <property type="entry name" value="HIGH FREQUENCY LYSOGENIZATION PROTEIN HFLD"/>
    <property type="match status" value="1"/>
</dbReference>
<dbReference type="PANTHER" id="PTHR38100:SF1">
    <property type="entry name" value="HIGH FREQUENCY LYSOGENIZATION PROTEIN HFLD"/>
    <property type="match status" value="1"/>
</dbReference>
<dbReference type="Pfam" id="PF04356">
    <property type="entry name" value="DUF489"/>
    <property type="match status" value="1"/>
</dbReference>
<dbReference type="SUPFAM" id="SSF101322">
    <property type="entry name" value="YcfC-like"/>
    <property type="match status" value="1"/>
</dbReference>
<evidence type="ECO:0000255" key="1">
    <source>
        <dbReference type="HAMAP-Rule" id="MF_00695"/>
    </source>
</evidence>
<sequence>MAKNYYDITLALAGICQSARLVQQLAHEGQCDNDALNTVLRGLLQTNPSSTLAVYGDTEQVLKMGLETLQSVLNANRQGEAAELTRYTLSLMVLERKLSASKSAMNTLGERISQLDRQLAHFDLESETMMSSLASIYVDVVSPLGPRIQVTGSPAILQSPLVQAKVRATLLAGIRSAVLWQQVGGSRLQLMFSRNRLFKQAQSILAHT</sequence>
<keyword id="KW-0997">Cell inner membrane</keyword>
<keyword id="KW-1003">Cell membrane</keyword>
<keyword id="KW-0963">Cytoplasm</keyword>
<keyword id="KW-0472">Membrane</keyword>
<reference key="1">
    <citation type="journal article" date="2010" name="J. Bacteriol.">
        <title>Genome sequence of the deep-rooted Yersinia pestis strain Angola reveals new insights into the evolution and pangenome of the plague bacterium.</title>
        <authorList>
            <person name="Eppinger M."/>
            <person name="Worsham P.L."/>
            <person name="Nikolich M.P."/>
            <person name="Riley D.R."/>
            <person name="Sebastian Y."/>
            <person name="Mou S."/>
            <person name="Achtman M."/>
            <person name="Lindler L.E."/>
            <person name="Ravel J."/>
        </authorList>
    </citation>
    <scope>NUCLEOTIDE SEQUENCE [LARGE SCALE GENOMIC DNA]</scope>
    <source>
        <strain>Angola</strain>
    </source>
</reference>
<comment type="subcellular location">
    <subcellularLocation>
        <location>Cytoplasm</location>
    </subcellularLocation>
    <subcellularLocation>
        <location evidence="1">Cell inner membrane</location>
        <topology evidence="1">Peripheral membrane protein</topology>
        <orientation evidence="1">Cytoplasmic side</orientation>
    </subcellularLocation>
</comment>
<comment type="similarity">
    <text evidence="1">Belongs to the HflD family.</text>
</comment>
<name>HFLD_YERPG</name>
<organism>
    <name type="scientific">Yersinia pestis bv. Antiqua (strain Angola)</name>
    <dbReference type="NCBI Taxonomy" id="349746"/>
    <lineage>
        <taxon>Bacteria</taxon>
        <taxon>Pseudomonadati</taxon>
        <taxon>Pseudomonadota</taxon>
        <taxon>Gammaproteobacteria</taxon>
        <taxon>Enterobacterales</taxon>
        <taxon>Yersiniaceae</taxon>
        <taxon>Yersinia</taxon>
    </lineage>
</organism>
<protein>
    <recommendedName>
        <fullName evidence="1">High frequency lysogenization protein HflD homolog</fullName>
    </recommendedName>
</protein>
<gene>
    <name evidence="1" type="primary">hflD</name>
    <name type="ordered locus">YpAngola_A2852</name>
</gene>
<feature type="chain" id="PRO_1000132310" description="High frequency lysogenization protein HflD homolog">
    <location>
        <begin position="1"/>
        <end position="208"/>
    </location>
</feature>
<accession>A9R0L6</accession>